<keyword id="KW-0158">Chromosome</keyword>
<keyword id="KW-0238">DNA-binding</keyword>
<keyword id="KW-0539">Nucleus</keyword>
<keyword id="KW-1185">Reference proteome</keyword>
<comment type="function">
    <text>Could act as an H1-type linker histone.</text>
</comment>
<comment type="subcellular location">
    <subcellularLocation>
        <location evidence="1">Nucleus</location>
    </subcellularLocation>
    <subcellularLocation>
        <location evidence="1">Chromosome</location>
    </subcellularLocation>
</comment>
<comment type="similarity">
    <text evidence="1">Belongs to the histone H1/H5 family.</text>
</comment>
<dbReference type="EMBL" id="AJ011780">
    <property type="protein sequence ID" value="CAB72936.1"/>
    <property type="molecule type" value="Genomic_DNA"/>
</dbReference>
<dbReference type="EMBL" id="AACD01000049">
    <property type="protein sequence ID" value="EAA63199.1"/>
    <property type="molecule type" value="Genomic_DNA"/>
</dbReference>
<dbReference type="EMBL" id="BN001306">
    <property type="protein sequence ID" value="CBF84060.1"/>
    <property type="molecule type" value="Genomic_DNA"/>
</dbReference>
<dbReference type="RefSeq" id="XP_660369.1">
    <property type="nucleotide sequence ID" value="XM_655277.1"/>
</dbReference>
<dbReference type="SMR" id="Q9P8F8"/>
<dbReference type="STRING" id="227321.Q9P8F8"/>
<dbReference type="EnsemblFungi" id="CBF84060">
    <property type="protein sequence ID" value="CBF84060"/>
    <property type="gene ID" value="ANIA_02765"/>
</dbReference>
<dbReference type="KEGG" id="ani:ANIA_02765"/>
<dbReference type="VEuPathDB" id="FungiDB:AN2765"/>
<dbReference type="eggNOG" id="KOG4012">
    <property type="taxonomic scope" value="Eukaryota"/>
</dbReference>
<dbReference type="HOGENOM" id="CLU_052897_0_0_1"/>
<dbReference type="InParanoid" id="Q9P8F8"/>
<dbReference type="OMA" id="MISECIA"/>
<dbReference type="OrthoDB" id="1110759at2759"/>
<dbReference type="Proteomes" id="UP000000560">
    <property type="component" value="Chromosome VI"/>
</dbReference>
<dbReference type="GO" id="GO:0000794">
    <property type="term" value="C:condensed nuclear chromosome"/>
    <property type="evidence" value="ECO:0000314"/>
    <property type="project" value="AspGD"/>
</dbReference>
<dbReference type="GO" id="GO:0000786">
    <property type="term" value="C:nucleosome"/>
    <property type="evidence" value="ECO:0007669"/>
    <property type="project" value="InterPro"/>
</dbReference>
<dbReference type="GO" id="GO:0005634">
    <property type="term" value="C:nucleus"/>
    <property type="evidence" value="ECO:0000314"/>
    <property type="project" value="AspGD"/>
</dbReference>
<dbReference type="GO" id="GO:0003690">
    <property type="term" value="F:double-stranded DNA binding"/>
    <property type="evidence" value="ECO:0000318"/>
    <property type="project" value="GO_Central"/>
</dbReference>
<dbReference type="GO" id="GO:0031492">
    <property type="term" value="F:nucleosomal DNA binding"/>
    <property type="evidence" value="ECO:0000318"/>
    <property type="project" value="GO_Central"/>
</dbReference>
<dbReference type="GO" id="GO:0030527">
    <property type="term" value="F:structural constituent of chromatin"/>
    <property type="evidence" value="ECO:0007669"/>
    <property type="project" value="InterPro"/>
</dbReference>
<dbReference type="GO" id="GO:0030261">
    <property type="term" value="P:chromosome condensation"/>
    <property type="evidence" value="ECO:0000318"/>
    <property type="project" value="GO_Central"/>
</dbReference>
<dbReference type="GO" id="GO:0045910">
    <property type="term" value="P:negative regulation of DNA recombination"/>
    <property type="evidence" value="ECO:0000318"/>
    <property type="project" value="GO_Central"/>
</dbReference>
<dbReference type="GO" id="GO:0006334">
    <property type="term" value="P:nucleosome assembly"/>
    <property type="evidence" value="ECO:0007669"/>
    <property type="project" value="InterPro"/>
</dbReference>
<dbReference type="CDD" id="cd00073">
    <property type="entry name" value="H15"/>
    <property type="match status" value="1"/>
</dbReference>
<dbReference type="FunFam" id="1.10.10.10:FF:000383">
    <property type="entry name" value="Histone H1"/>
    <property type="match status" value="1"/>
</dbReference>
<dbReference type="Gene3D" id="1.10.10.10">
    <property type="entry name" value="Winged helix-like DNA-binding domain superfamily/Winged helix DNA-binding domain"/>
    <property type="match status" value="1"/>
</dbReference>
<dbReference type="InterPro" id="IPR005819">
    <property type="entry name" value="H1/H5"/>
</dbReference>
<dbReference type="InterPro" id="IPR005818">
    <property type="entry name" value="Histone_H1/H5_H15"/>
</dbReference>
<dbReference type="InterPro" id="IPR036388">
    <property type="entry name" value="WH-like_DNA-bd_sf"/>
</dbReference>
<dbReference type="InterPro" id="IPR036390">
    <property type="entry name" value="WH_DNA-bd_sf"/>
</dbReference>
<dbReference type="PANTHER" id="PTHR11467:SF36">
    <property type="entry name" value="HISTONE 24-RELATED"/>
    <property type="match status" value="1"/>
</dbReference>
<dbReference type="PANTHER" id="PTHR11467">
    <property type="entry name" value="HISTONE H1"/>
    <property type="match status" value="1"/>
</dbReference>
<dbReference type="Pfam" id="PF00538">
    <property type="entry name" value="Linker_histone"/>
    <property type="match status" value="1"/>
</dbReference>
<dbReference type="PRINTS" id="PR00624">
    <property type="entry name" value="HISTONEH5"/>
</dbReference>
<dbReference type="SMART" id="SM00526">
    <property type="entry name" value="H15"/>
    <property type="match status" value="1"/>
</dbReference>
<dbReference type="SUPFAM" id="SSF46785">
    <property type="entry name" value="Winged helix' DNA-binding domain"/>
    <property type="match status" value="1"/>
</dbReference>
<dbReference type="PROSITE" id="PS51504">
    <property type="entry name" value="H15"/>
    <property type="match status" value="1"/>
</dbReference>
<organism>
    <name type="scientific">Emericella nidulans (strain FGSC A4 / ATCC 38163 / CBS 112.46 / NRRL 194 / M139)</name>
    <name type="common">Aspergillus nidulans</name>
    <dbReference type="NCBI Taxonomy" id="227321"/>
    <lineage>
        <taxon>Eukaryota</taxon>
        <taxon>Fungi</taxon>
        <taxon>Dikarya</taxon>
        <taxon>Ascomycota</taxon>
        <taxon>Pezizomycotina</taxon>
        <taxon>Eurotiomycetes</taxon>
        <taxon>Eurotiomycetidae</taxon>
        <taxon>Eurotiales</taxon>
        <taxon>Aspergillaceae</taxon>
        <taxon>Aspergillus</taxon>
        <taxon>Aspergillus subgen. Nidulantes</taxon>
    </lineage>
</organism>
<accession>Q9P8F8</accession>
<accession>C8VJN8</accession>
<accession>Q5B9L5</accession>
<feature type="chain" id="PRO_0000195999" description="Histone H1">
    <location>
        <begin position="1"/>
        <end position="200"/>
    </location>
</feature>
<feature type="domain" description="H15" evidence="1">
    <location>
        <begin position="18"/>
        <end position="93"/>
    </location>
</feature>
<feature type="region of interest" description="Disordered" evidence="2">
    <location>
        <begin position="1"/>
        <end position="20"/>
    </location>
</feature>
<feature type="region of interest" description="Disordered" evidence="2">
    <location>
        <begin position="78"/>
        <end position="200"/>
    </location>
</feature>
<feature type="compositionally biased region" description="Low complexity" evidence="2">
    <location>
        <begin position="1"/>
        <end position="14"/>
    </location>
</feature>
<feature type="compositionally biased region" description="Low complexity" evidence="2">
    <location>
        <begin position="94"/>
        <end position="116"/>
    </location>
</feature>
<feature type="compositionally biased region" description="Basic and acidic residues" evidence="2">
    <location>
        <begin position="120"/>
        <end position="131"/>
    </location>
</feature>
<feature type="compositionally biased region" description="Low complexity" evidence="2">
    <location>
        <begin position="159"/>
        <end position="185"/>
    </location>
</feature>
<sequence>MPPKKAPTTAKKAASGPTHTSYRDMIKDAILNLKERNGSSRQSIKKYVLANNKLAPASQNAFDSQFNKAIKAGVEKGDFIQPKGTSGPVKLAKKQAPAKPAPKKPATTTKTAAPKKTATKKADKAEKAEKPKTKKTNAGVKKPAGRPKANTAKPRKASTAAPAVVDKPKVVSVTKSGRKTTTTAKPTEKATKKTAKNKKA</sequence>
<reference key="1">
    <citation type="journal article" date="2000" name="Mol. Microbiol.">
        <title>Deletion of the unique gene encoding a typical histone H1 has no apparent phenotype in Aspergillus nidulans.</title>
        <authorList>
            <person name="Ramon A.C."/>
            <person name="Muro-Pastor M."/>
            <person name="Scazzocchio C."/>
            <person name="Gonzalez R."/>
        </authorList>
    </citation>
    <scope>NUCLEOTIDE SEQUENCE [GENOMIC DNA]</scope>
</reference>
<reference key="2">
    <citation type="journal article" date="2005" name="Nature">
        <title>Sequencing of Aspergillus nidulans and comparative analysis with A. fumigatus and A. oryzae.</title>
        <authorList>
            <person name="Galagan J.E."/>
            <person name="Calvo S.E."/>
            <person name="Cuomo C."/>
            <person name="Ma L.-J."/>
            <person name="Wortman J.R."/>
            <person name="Batzoglou S."/>
            <person name="Lee S.-I."/>
            <person name="Bastuerkmen M."/>
            <person name="Spevak C.C."/>
            <person name="Clutterbuck J."/>
            <person name="Kapitonov V."/>
            <person name="Jurka J."/>
            <person name="Scazzocchio C."/>
            <person name="Farman M.L."/>
            <person name="Butler J."/>
            <person name="Purcell S."/>
            <person name="Harris S."/>
            <person name="Braus G.H."/>
            <person name="Draht O."/>
            <person name="Busch S."/>
            <person name="D'Enfert C."/>
            <person name="Bouchier C."/>
            <person name="Goldman G.H."/>
            <person name="Bell-Pedersen D."/>
            <person name="Griffiths-Jones S."/>
            <person name="Doonan J.H."/>
            <person name="Yu J."/>
            <person name="Vienken K."/>
            <person name="Pain A."/>
            <person name="Freitag M."/>
            <person name="Selker E.U."/>
            <person name="Archer D.B."/>
            <person name="Penalva M.A."/>
            <person name="Oakley B.R."/>
            <person name="Momany M."/>
            <person name="Tanaka T."/>
            <person name="Kumagai T."/>
            <person name="Asai K."/>
            <person name="Machida M."/>
            <person name="Nierman W.C."/>
            <person name="Denning D.W."/>
            <person name="Caddick M.X."/>
            <person name="Hynes M."/>
            <person name="Paoletti M."/>
            <person name="Fischer R."/>
            <person name="Miller B.L."/>
            <person name="Dyer P.S."/>
            <person name="Sachs M.S."/>
            <person name="Osmani S.A."/>
            <person name="Birren B.W."/>
        </authorList>
    </citation>
    <scope>NUCLEOTIDE SEQUENCE [LARGE SCALE GENOMIC DNA]</scope>
    <source>
        <strain>FGSC A4 / ATCC 38163 / CBS 112.46 / NRRL 194 / M139</strain>
    </source>
</reference>
<reference key="3">
    <citation type="journal article" date="2009" name="Fungal Genet. Biol.">
        <title>The 2008 update of the Aspergillus nidulans genome annotation: a community effort.</title>
        <authorList>
            <person name="Wortman J.R."/>
            <person name="Gilsenan J.M."/>
            <person name="Joardar V."/>
            <person name="Deegan J."/>
            <person name="Clutterbuck J."/>
            <person name="Andersen M.R."/>
            <person name="Archer D."/>
            <person name="Bencina M."/>
            <person name="Braus G."/>
            <person name="Coutinho P."/>
            <person name="von Dohren H."/>
            <person name="Doonan J."/>
            <person name="Driessen A.J."/>
            <person name="Durek P."/>
            <person name="Espeso E."/>
            <person name="Fekete E."/>
            <person name="Flipphi M."/>
            <person name="Estrada C.G."/>
            <person name="Geysens S."/>
            <person name="Goldman G."/>
            <person name="de Groot P.W."/>
            <person name="Hansen K."/>
            <person name="Harris S.D."/>
            <person name="Heinekamp T."/>
            <person name="Helmstaedt K."/>
            <person name="Henrissat B."/>
            <person name="Hofmann G."/>
            <person name="Homan T."/>
            <person name="Horio T."/>
            <person name="Horiuchi H."/>
            <person name="James S."/>
            <person name="Jones M."/>
            <person name="Karaffa L."/>
            <person name="Karanyi Z."/>
            <person name="Kato M."/>
            <person name="Keller N."/>
            <person name="Kelly D.E."/>
            <person name="Kiel J.A."/>
            <person name="Kim J.M."/>
            <person name="van der Klei I.J."/>
            <person name="Klis F.M."/>
            <person name="Kovalchuk A."/>
            <person name="Krasevec N."/>
            <person name="Kubicek C.P."/>
            <person name="Liu B."/>
            <person name="Maccabe A."/>
            <person name="Meyer V."/>
            <person name="Mirabito P."/>
            <person name="Miskei M."/>
            <person name="Mos M."/>
            <person name="Mullins J."/>
            <person name="Nelson D.R."/>
            <person name="Nielsen J."/>
            <person name="Oakley B.R."/>
            <person name="Osmani S.A."/>
            <person name="Pakula T."/>
            <person name="Paszewski A."/>
            <person name="Paulsen I."/>
            <person name="Pilsyk S."/>
            <person name="Pocsi I."/>
            <person name="Punt P.J."/>
            <person name="Ram A.F."/>
            <person name="Ren Q."/>
            <person name="Robellet X."/>
            <person name="Robson G."/>
            <person name="Seiboth B."/>
            <person name="van Solingen P."/>
            <person name="Specht T."/>
            <person name="Sun J."/>
            <person name="Taheri-Talesh N."/>
            <person name="Takeshita N."/>
            <person name="Ussery D."/>
            <person name="vanKuyk P.A."/>
            <person name="Visser H."/>
            <person name="van de Vondervoort P.J."/>
            <person name="de Vries R.P."/>
            <person name="Walton J."/>
            <person name="Xiang X."/>
            <person name="Xiong Y."/>
            <person name="Zeng A.P."/>
            <person name="Brandt B.W."/>
            <person name="Cornell M.J."/>
            <person name="van den Hondel C.A."/>
            <person name="Visser J."/>
            <person name="Oliver S.G."/>
            <person name="Turner G."/>
        </authorList>
    </citation>
    <scope>GENOME REANNOTATION</scope>
    <source>
        <strain>FGSC A4 / ATCC 38163 / CBS 112.46 / NRRL 194 / M139</strain>
    </source>
</reference>
<name>H1_EMENI</name>
<gene>
    <name type="primary">hhoA</name>
    <name type="ORF">AN2765</name>
</gene>
<protein>
    <recommendedName>
        <fullName>Histone H1</fullName>
    </recommendedName>
</protein>
<evidence type="ECO:0000255" key="1">
    <source>
        <dbReference type="PROSITE-ProRule" id="PRU00837"/>
    </source>
</evidence>
<evidence type="ECO:0000256" key="2">
    <source>
        <dbReference type="SAM" id="MobiDB-lite"/>
    </source>
</evidence>
<proteinExistence type="inferred from homology"/>